<proteinExistence type="inferred from homology"/>
<reference key="1">
    <citation type="journal article" date="1999" name="Biosci. Biotechnol. Biochem.">
        <title>Sequence analysis of a 32-kb region including the major ribosomal protein gene clusters from alkaliphilic Bacillus sp. strain C-125.</title>
        <authorList>
            <person name="Takami H."/>
            <person name="Takaki Y."/>
            <person name="Nakasone K."/>
            <person name="Hirama C."/>
            <person name="Inoue A."/>
            <person name="Horikoshi K."/>
        </authorList>
    </citation>
    <scope>NUCLEOTIDE SEQUENCE [GENOMIC DNA]</scope>
    <source>
        <strain>ATCC BAA-125 / DSM 18197 / FERM 7344 / JCM 9153 / C-125</strain>
    </source>
</reference>
<reference key="2">
    <citation type="journal article" date="2000" name="Nucleic Acids Res.">
        <title>Complete genome sequence of the alkaliphilic bacterium Bacillus halodurans and genomic sequence comparison with Bacillus subtilis.</title>
        <authorList>
            <person name="Takami H."/>
            <person name="Nakasone K."/>
            <person name="Takaki Y."/>
            <person name="Maeno G."/>
            <person name="Sasaki R."/>
            <person name="Masui N."/>
            <person name="Fuji F."/>
            <person name="Hirama C."/>
            <person name="Nakamura Y."/>
            <person name="Ogasawara N."/>
            <person name="Kuhara S."/>
            <person name="Horikoshi K."/>
        </authorList>
    </citation>
    <scope>NUCLEOTIDE SEQUENCE [LARGE SCALE GENOMIC DNA]</scope>
    <source>
        <strain>ATCC BAA-125 / DSM 18197 / FERM 7344 / JCM 9153 / C-125</strain>
    </source>
</reference>
<keyword id="KW-1185">Reference proteome</keyword>
<keyword id="KW-0687">Ribonucleoprotein</keyword>
<keyword id="KW-0689">Ribosomal protein</keyword>
<keyword id="KW-0694">RNA-binding</keyword>
<keyword id="KW-0699">rRNA-binding</keyword>
<feature type="chain" id="PRO_0000077064" description="Large ribosomal subunit protein uL3">
    <location>
        <begin position="1"/>
        <end position="209"/>
    </location>
</feature>
<feature type="region of interest" description="Disordered" evidence="2">
    <location>
        <begin position="128"/>
        <end position="152"/>
    </location>
</feature>
<comment type="function">
    <text evidence="1">One of the primary rRNA binding proteins, it binds directly near the 3'-end of the 23S rRNA, where it nucleates assembly of the 50S subunit.</text>
</comment>
<comment type="subunit">
    <text evidence="1">Part of the 50S ribosomal subunit. Forms a cluster with proteins L14 and L19.</text>
</comment>
<comment type="similarity">
    <text evidence="1">Belongs to the universal ribosomal protein uL3 family.</text>
</comment>
<evidence type="ECO:0000255" key="1">
    <source>
        <dbReference type="HAMAP-Rule" id="MF_01325"/>
    </source>
</evidence>
<evidence type="ECO:0000256" key="2">
    <source>
        <dbReference type="SAM" id="MobiDB-lite"/>
    </source>
</evidence>
<evidence type="ECO:0000305" key="3"/>
<gene>
    <name evidence="1" type="primary">rplC</name>
    <name type="ordered locus">BH0134</name>
</gene>
<accession>Q9Z9L4</accession>
<accession>Q9JPY6</accession>
<organism>
    <name type="scientific">Halalkalibacterium halodurans (strain ATCC BAA-125 / DSM 18197 / FERM 7344 / JCM 9153 / C-125)</name>
    <name type="common">Bacillus halodurans</name>
    <dbReference type="NCBI Taxonomy" id="272558"/>
    <lineage>
        <taxon>Bacteria</taxon>
        <taxon>Bacillati</taxon>
        <taxon>Bacillota</taxon>
        <taxon>Bacilli</taxon>
        <taxon>Bacillales</taxon>
        <taxon>Bacillaceae</taxon>
        <taxon>Halalkalibacterium (ex Joshi et al. 2022)</taxon>
    </lineage>
</organism>
<protein>
    <recommendedName>
        <fullName evidence="1">Large ribosomal subunit protein uL3</fullName>
    </recommendedName>
    <alternativeName>
        <fullName evidence="3">50S ribosomal protein L3</fullName>
    </alternativeName>
</protein>
<dbReference type="EMBL" id="AB017508">
    <property type="protein sequence ID" value="BAA75271.1"/>
    <property type="molecule type" value="Genomic_DNA"/>
</dbReference>
<dbReference type="EMBL" id="BA000004">
    <property type="protein sequence ID" value="BAB03853.1"/>
    <property type="molecule type" value="Genomic_DNA"/>
</dbReference>
<dbReference type="PIR" id="T44383">
    <property type="entry name" value="T44383"/>
</dbReference>
<dbReference type="RefSeq" id="WP_010896317.1">
    <property type="nucleotide sequence ID" value="NC_002570.2"/>
</dbReference>
<dbReference type="SMR" id="Q9Z9L4"/>
<dbReference type="STRING" id="272558.gene:10725974"/>
<dbReference type="GeneID" id="87595675"/>
<dbReference type="KEGG" id="bha:BH0134"/>
<dbReference type="eggNOG" id="COG0087">
    <property type="taxonomic scope" value="Bacteria"/>
</dbReference>
<dbReference type="HOGENOM" id="CLU_044142_4_1_9"/>
<dbReference type="OrthoDB" id="9806135at2"/>
<dbReference type="Proteomes" id="UP000001258">
    <property type="component" value="Chromosome"/>
</dbReference>
<dbReference type="GO" id="GO:0022625">
    <property type="term" value="C:cytosolic large ribosomal subunit"/>
    <property type="evidence" value="ECO:0007669"/>
    <property type="project" value="TreeGrafter"/>
</dbReference>
<dbReference type="GO" id="GO:0019843">
    <property type="term" value="F:rRNA binding"/>
    <property type="evidence" value="ECO:0007669"/>
    <property type="project" value="UniProtKB-UniRule"/>
</dbReference>
<dbReference type="GO" id="GO:0003735">
    <property type="term" value="F:structural constituent of ribosome"/>
    <property type="evidence" value="ECO:0007669"/>
    <property type="project" value="InterPro"/>
</dbReference>
<dbReference type="GO" id="GO:0006412">
    <property type="term" value="P:translation"/>
    <property type="evidence" value="ECO:0007669"/>
    <property type="project" value="UniProtKB-UniRule"/>
</dbReference>
<dbReference type="FunFam" id="2.40.30.10:FF:000004">
    <property type="entry name" value="50S ribosomal protein L3"/>
    <property type="match status" value="1"/>
</dbReference>
<dbReference type="FunFam" id="3.30.160.810:FF:000002">
    <property type="entry name" value="50S ribosomal protein L3"/>
    <property type="match status" value="1"/>
</dbReference>
<dbReference type="Gene3D" id="3.30.160.810">
    <property type="match status" value="1"/>
</dbReference>
<dbReference type="Gene3D" id="2.40.30.10">
    <property type="entry name" value="Translation factors"/>
    <property type="match status" value="1"/>
</dbReference>
<dbReference type="HAMAP" id="MF_01325_B">
    <property type="entry name" value="Ribosomal_uL3_B"/>
    <property type="match status" value="1"/>
</dbReference>
<dbReference type="InterPro" id="IPR000597">
    <property type="entry name" value="Ribosomal_uL3"/>
</dbReference>
<dbReference type="InterPro" id="IPR019927">
    <property type="entry name" value="Ribosomal_uL3_bac/org-type"/>
</dbReference>
<dbReference type="InterPro" id="IPR019926">
    <property type="entry name" value="Ribosomal_uL3_CS"/>
</dbReference>
<dbReference type="InterPro" id="IPR009000">
    <property type="entry name" value="Transl_B-barrel_sf"/>
</dbReference>
<dbReference type="NCBIfam" id="TIGR03625">
    <property type="entry name" value="L3_bact"/>
    <property type="match status" value="1"/>
</dbReference>
<dbReference type="PANTHER" id="PTHR11229">
    <property type="entry name" value="50S RIBOSOMAL PROTEIN L3"/>
    <property type="match status" value="1"/>
</dbReference>
<dbReference type="PANTHER" id="PTHR11229:SF16">
    <property type="entry name" value="LARGE RIBOSOMAL SUBUNIT PROTEIN UL3C"/>
    <property type="match status" value="1"/>
</dbReference>
<dbReference type="Pfam" id="PF00297">
    <property type="entry name" value="Ribosomal_L3"/>
    <property type="match status" value="1"/>
</dbReference>
<dbReference type="SUPFAM" id="SSF50447">
    <property type="entry name" value="Translation proteins"/>
    <property type="match status" value="1"/>
</dbReference>
<dbReference type="PROSITE" id="PS00474">
    <property type="entry name" value="RIBOSOMAL_L3"/>
    <property type="match status" value="1"/>
</dbReference>
<sequence length="209" mass="22517">MSKGILGKKVGMTQVFAENGDVIPVTVIEAAPNVVLQKKTVDSDGYEAVQLGFDDQKQNNANKPEKGHAAKAETAPKRFIKEIRGVNLDEFEVGQEIKVDAFAEGDIVDVTGTSKGKGFAGAIKRHNQARGPMSHGSRYHRRPGSMGPVDPNRVFKGKALPGRMGGEQVTVQNLEIIKVDAERNLLLVKGNVPGAKKSYVTVRSAIKSK</sequence>
<name>RL3_HALH5</name>